<evidence type="ECO:0000250" key="1"/>
<evidence type="ECO:0000250" key="2">
    <source>
        <dbReference type="UniProtKB" id="P00157"/>
    </source>
</evidence>
<evidence type="ECO:0000255" key="3">
    <source>
        <dbReference type="PROSITE-ProRule" id="PRU00967"/>
    </source>
</evidence>
<evidence type="ECO:0000255" key="4">
    <source>
        <dbReference type="PROSITE-ProRule" id="PRU00968"/>
    </source>
</evidence>
<name>CYB_LEPAR</name>
<reference key="1">
    <citation type="submission" date="1997-06" db="EMBL/GenBank/DDBJ databases">
        <title>Cytochrome b phylogeny of North American hares and jackrabbits (Lepus, Lagomorpha) and the effects of mutational saturation in outgroup taxa.</title>
        <authorList>
            <person name="Halanych K.M."/>
            <person name="Demboski J.R."/>
            <person name="van Vuuren B.J."/>
            <person name="Klein D.R."/>
            <person name="Cook J.A."/>
        </authorList>
    </citation>
    <scope>NUCLEOTIDE SEQUENCE [GENOMIC DNA]</scope>
    <source>
        <strain>Isolate AF 20299</strain>
    </source>
</reference>
<organism>
    <name type="scientific">Lepus arcticus</name>
    <name type="common">Arctic hare</name>
    <dbReference type="NCBI Taxonomy" id="62618"/>
    <lineage>
        <taxon>Eukaryota</taxon>
        <taxon>Metazoa</taxon>
        <taxon>Chordata</taxon>
        <taxon>Craniata</taxon>
        <taxon>Vertebrata</taxon>
        <taxon>Euteleostomi</taxon>
        <taxon>Mammalia</taxon>
        <taxon>Eutheria</taxon>
        <taxon>Euarchontoglires</taxon>
        <taxon>Glires</taxon>
        <taxon>Lagomorpha</taxon>
        <taxon>Leporidae</taxon>
        <taxon>Lepus</taxon>
    </lineage>
</organism>
<keyword id="KW-0249">Electron transport</keyword>
<keyword id="KW-0349">Heme</keyword>
<keyword id="KW-0408">Iron</keyword>
<keyword id="KW-0472">Membrane</keyword>
<keyword id="KW-0479">Metal-binding</keyword>
<keyword id="KW-0496">Mitochondrion</keyword>
<keyword id="KW-0999">Mitochondrion inner membrane</keyword>
<keyword id="KW-0679">Respiratory chain</keyword>
<keyword id="KW-0812">Transmembrane</keyword>
<keyword id="KW-1133">Transmembrane helix</keyword>
<keyword id="KW-0813">Transport</keyword>
<keyword id="KW-0830">Ubiquinone</keyword>
<protein>
    <recommendedName>
        <fullName>Cytochrome b</fullName>
    </recommendedName>
    <alternativeName>
        <fullName>Complex III subunit 3</fullName>
    </alternativeName>
    <alternativeName>
        <fullName>Complex III subunit III</fullName>
    </alternativeName>
    <alternativeName>
        <fullName>Cytochrome b-c1 complex subunit 3</fullName>
    </alternativeName>
    <alternativeName>
        <fullName>Ubiquinol-cytochrome-c reductase complex cytochrome b subunit</fullName>
    </alternativeName>
</protein>
<accession>O47555</accession>
<proteinExistence type="inferred from homology"/>
<dbReference type="EMBL" id="AF010153">
    <property type="protein sequence ID" value="AAB94493.1"/>
    <property type="molecule type" value="Genomic_DNA"/>
</dbReference>
<dbReference type="SMR" id="O47555"/>
<dbReference type="GO" id="GO:0005743">
    <property type="term" value="C:mitochondrial inner membrane"/>
    <property type="evidence" value="ECO:0007669"/>
    <property type="project" value="UniProtKB-SubCell"/>
</dbReference>
<dbReference type="GO" id="GO:0046872">
    <property type="term" value="F:metal ion binding"/>
    <property type="evidence" value="ECO:0007669"/>
    <property type="project" value="UniProtKB-KW"/>
</dbReference>
<dbReference type="GO" id="GO:0008121">
    <property type="term" value="F:ubiquinol-cytochrome-c reductase activity"/>
    <property type="evidence" value="ECO:0007669"/>
    <property type="project" value="TreeGrafter"/>
</dbReference>
<dbReference type="GO" id="GO:0006122">
    <property type="term" value="P:mitochondrial electron transport, ubiquinol to cytochrome c"/>
    <property type="evidence" value="ECO:0007669"/>
    <property type="project" value="TreeGrafter"/>
</dbReference>
<dbReference type="CDD" id="cd00284">
    <property type="entry name" value="Cytochrome_b_N"/>
    <property type="match status" value="1"/>
</dbReference>
<dbReference type="Gene3D" id="1.20.810.10">
    <property type="entry name" value="Cytochrome Bc1 Complex, Chain C"/>
    <property type="match status" value="1"/>
</dbReference>
<dbReference type="InterPro" id="IPR005798">
    <property type="entry name" value="Cyt_b/b6_C"/>
</dbReference>
<dbReference type="InterPro" id="IPR005797">
    <property type="entry name" value="Cyt_b/b6_N"/>
</dbReference>
<dbReference type="InterPro" id="IPR027387">
    <property type="entry name" value="Cytb/b6-like_sf"/>
</dbReference>
<dbReference type="InterPro" id="IPR048259">
    <property type="entry name" value="Cytochrome_b_N_euk/bac"/>
</dbReference>
<dbReference type="InterPro" id="IPR016174">
    <property type="entry name" value="Di-haem_cyt_TM"/>
</dbReference>
<dbReference type="PANTHER" id="PTHR19271">
    <property type="entry name" value="CYTOCHROME B"/>
    <property type="match status" value="1"/>
</dbReference>
<dbReference type="PANTHER" id="PTHR19271:SF16">
    <property type="entry name" value="CYTOCHROME B"/>
    <property type="match status" value="1"/>
</dbReference>
<dbReference type="Pfam" id="PF00033">
    <property type="entry name" value="Cytochrome_B"/>
    <property type="match status" value="1"/>
</dbReference>
<dbReference type="PIRSF" id="PIRSF000032">
    <property type="entry name" value="Cytochrome_b6"/>
    <property type="match status" value="1"/>
</dbReference>
<dbReference type="SUPFAM" id="SSF81342">
    <property type="entry name" value="Transmembrane di-heme cytochromes"/>
    <property type="match status" value="1"/>
</dbReference>
<dbReference type="PROSITE" id="PS51003">
    <property type="entry name" value="CYTB_CTER"/>
    <property type="match status" value="1"/>
</dbReference>
<dbReference type="PROSITE" id="PS51002">
    <property type="entry name" value="CYTB_NTER"/>
    <property type="match status" value="1"/>
</dbReference>
<sequence length="234" mass="26391">MTNIRKTHPLLKIVNHSLIDLPAPSNISAWWNFGSLLGLCLMIQILTGLFLAMHYTSDTATAFSSVTHICRDVNYGWLIRYLHANGASMFFICLYMHVGRGIYYGSYTYLETWNIGIILLFAVMATAFMGYVLPWGQMSFWGATVITNLLSAIPYIGTTLVEWIWGGFSVDKATLTRFFAFHFILPFIIAALVMIHLLFLHETGSNNPSGIPSDSDKIPFHPYYTIKDLLGFLV</sequence>
<comment type="function">
    <text evidence="2">Component of the ubiquinol-cytochrome c reductase complex (complex III or cytochrome b-c1 complex) that is part of the mitochondrial respiratory chain. The b-c1 complex mediates electron transfer from ubiquinol to cytochrome c. Contributes to the generation of a proton gradient across the mitochondrial membrane that is then used for ATP synthesis.</text>
</comment>
<comment type="cofactor">
    <cofactor evidence="2">
        <name>heme b</name>
        <dbReference type="ChEBI" id="CHEBI:60344"/>
    </cofactor>
    <text evidence="2">Binds 2 heme b groups non-covalently.</text>
</comment>
<comment type="subunit">
    <text evidence="2">The cytochrome bc1 complex contains 11 subunits: 3 respiratory subunits (MT-CYB, CYC1 and UQCRFS1), 2 core proteins (UQCRC1 and UQCRC2) and 6 low-molecular weight proteins (UQCRH/QCR6, UQCRB/QCR7, UQCRQ/QCR8, UQCR10/QCR9, UQCR11/QCR10 and a cleavage product of UQCRFS1). This cytochrome bc1 complex then forms a dimer.</text>
</comment>
<comment type="subcellular location">
    <subcellularLocation>
        <location evidence="2">Mitochondrion inner membrane</location>
        <topology evidence="2">Multi-pass membrane protein</topology>
    </subcellularLocation>
</comment>
<comment type="miscellaneous">
    <text evidence="1">Heme 1 (or BL or b562) is low-potential and absorbs at about 562 nm, and heme 2 (or BH or b566) is high-potential and absorbs at about 566 nm.</text>
</comment>
<comment type="similarity">
    <text evidence="3 4">Belongs to the cytochrome b family.</text>
</comment>
<comment type="caution">
    <text evidence="2">The full-length protein contains only eight transmembrane helices, not nine as predicted by bioinformatics tools.</text>
</comment>
<feature type="chain" id="PRO_0000061098" description="Cytochrome b">
    <location>
        <begin position="1"/>
        <end position="234" status="greater than"/>
    </location>
</feature>
<feature type="transmembrane region" description="Helical" evidence="2">
    <location>
        <begin position="33"/>
        <end position="53"/>
    </location>
</feature>
<feature type="transmembrane region" description="Helical" evidence="2">
    <location>
        <begin position="77"/>
        <end position="98"/>
    </location>
</feature>
<feature type="transmembrane region" description="Helical" evidence="2">
    <location>
        <begin position="113"/>
        <end position="133"/>
    </location>
</feature>
<feature type="transmembrane region" description="Helical" evidence="2">
    <location>
        <begin position="178"/>
        <end position="198"/>
    </location>
</feature>
<feature type="transmembrane region" description="Helical" evidence="2">
    <location>
        <begin position="226"/>
        <end position="234" status="greater than"/>
    </location>
</feature>
<feature type="binding site" description="axial binding residue" evidence="2">
    <location>
        <position position="83"/>
    </location>
    <ligand>
        <name>heme b</name>
        <dbReference type="ChEBI" id="CHEBI:60344"/>
        <label>b562</label>
    </ligand>
    <ligandPart>
        <name>Fe</name>
        <dbReference type="ChEBI" id="CHEBI:18248"/>
    </ligandPart>
</feature>
<feature type="binding site" description="axial binding residue" evidence="2">
    <location>
        <position position="97"/>
    </location>
    <ligand>
        <name>heme b</name>
        <dbReference type="ChEBI" id="CHEBI:60344"/>
        <label>b566</label>
    </ligand>
    <ligandPart>
        <name>Fe</name>
        <dbReference type="ChEBI" id="CHEBI:18248"/>
    </ligandPart>
</feature>
<feature type="binding site" description="axial binding residue" evidence="2">
    <location>
        <position position="182"/>
    </location>
    <ligand>
        <name>heme b</name>
        <dbReference type="ChEBI" id="CHEBI:60344"/>
        <label>b562</label>
    </ligand>
    <ligandPart>
        <name>Fe</name>
        <dbReference type="ChEBI" id="CHEBI:18248"/>
    </ligandPart>
</feature>
<feature type="binding site" description="axial binding residue" evidence="2">
    <location>
        <position position="196"/>
    </location>
    <ligand>
        <name>heme b</name>
        <dbReference type="ChEBI" id="CHEBI:60344"/>
        <label>b566</label>
    </ligand>
    <ligandPart>
        <name>Fe</name>
        <dbReference type="ChEBI" id="CHEBI:18248"/>
    </ligandPart>
</feature>
<feature type="binding site" evidence="2">
    <location>
        <position position="201"/>
    </location>
    <ligand>
        <name>a ubiquinone</name>
        <dbReference type="ChEBI" id="CHEBI:16389"/>
    </ligand>
</feature>
<feature type="non-terminal residue">
    <location>
        <position position="234"/>
    </location>
</feature>
<geneLocation type="mitochondrion"/>
<gene>
    <name type="primary">MT-CYB</name>
    <name type="synonym">COB</name>
    <name type="synonym">CYTB</name>
    <name type="synonym">MTCYB</name>
</gene>